<sequence length="334" mass="36073">MRGSFFSRLPPQLSLLLLLLLLLSWRRVWTQEHIGTDPSKSPVAPVCPEACSCSPGGKANCSALALPAVPAGLSWQVRSLLLDRNRVSTLPPGAFADAGALLYLVLRENRLRSVHARAFWGLGVLQRLDLSSNQLETLSPGTFTPLRALSFLSLAGNRLALLEPSILGPLPLLRVLSLQDNSLSALEAGLLNSLPALDVLRLHGNPWACSCALRPLCTWLRKHPRPTSETETLLCVSPKLQTLNLLTDFPDNAFKQCTQSLAARDLAVVYALGPASFLASLAICLALGSVLTACGARRRRRRTTVRHLIRRQPDPEGPASLEDVGSPTTTAIQA</sequence>
<organism>
    <name type="scientific">Rattus norvegicus</name>
    <name type="common">Rat</name>
    <dbReference type="NCBI Taxonomy" id="10116"/>
    <lineage>
        <taxon>Eukaryota</taxon>
        <taxon>Metazoa</taxon>
        <taxon>Chordata</taxon>
        <taxon>Craniata</taxon>
        <taxon>Vertebrata</taxon>
        <taxon>Euteleostomi</taxon>
        <taxon>Mammalia</taxon>
        <taxon>Eutheria</taxon>
        <taxon>Euarchontoglires</taxon>
        <taxon>Glires</taxon>
        <taxon>Rodentia</taxon>
        <taxon>Myomorpha</taxon>
        <taxon>Muroidea</taxon>
        <taxon>Muridae</taxon>
        <taxon>Murinae</taxon>
        <taxon>Rattus</taxon>
    </lineage>
</organism>
<protein>
    <recommendedName>
        <fullName>Leucine-rich repeat-containing protein 26</fullName>
    </recommendedName>
    <alternativeName>
        <fullName>BK channel auxiliary gamma subunit LRRC26</fullName>
    </alternativeName>
</protein>
<name>LRC26_RAT</name>
<accession>Q6P7C4</accession>
<dbReference type="EMBL" id="BC061729">
    <property type="protein sequence ID" value="AAH61729.1"/>
    <property type="molecule type" value="mRNA"/>
</dbReference>
<dbReference type="RefSeq" id="NP_001014075.1">
    <property type="nucleotide sequence ID" value="NM_001014053.1"/>
</dbReference>
<dbReference type="SMR" id="Q6P7C4"/>
<dbReference type="FunCoup" id="Q6P7C4">
    <property type="interactions" value="2"/>
</dbReference>
<dbReference type="STRING" id="10116.ENSRNOP00000015242"/>
<dbReference type="PhosphoSitePlus" id="Q6P7C4"/>
<dbReference type="PaxDb" id="10116-ENSRNOP00000015242"/>
<dbReference type="Ensembl" id="ENSRNOT00000015242.4">
    <property type="protein sequence ID" value="ENSRNOP00000015242.2"/>
    <property type="gene ID" value="ENSRNOG00000011457.4"/>
</dbReference>
<dbReference type="GeneID" id="311803"/>
<dbReference type="KEGG" id="rno:311803"/>
<dbReference type="UCSC" id="RGD:1308398">
    <property type="organism name" value="rat"/>
</dbReference>
<dbReference type="AGR" id="RGD:1308398"/>
<dbReference type="CTD" id="389816"/>
<dbReference type="RGD" id="1308398">
    <property type="gene designation" value="Lrrc26"/>
</dbReference>
<dbReference type="eggNOG" id="KOG0619">
    <property type="taxonomic scope" value="Eukaryota"/>
</dbReference>
<dbReference type="GeneTree" id="ENSGT00940000162780"/>
<dbReference type="HOGENOM" id="CLU_000288_18_10_1"/>
<dbReference type="InParanoid" id="Q6P7C4"/>
<dbReference type="OMA" id="DAAFSHC"/>
<dbReference type="OrthoDB" id="676979at2759"/>
<dbReference type="PhylomeDB" id="Q6P7C4"/>
<dbReference type="TreeFam" id="TF334689"/>
<dbReference type="PRO" id="PR:Q6P7C4"/>
<dbReference type="Proteomes" id="UP000002494">
    <property type="component" value="Chromosome 3"/>
</dbReference>
<dbReference type="Bgee" id="ENSRNOG00000011457">
    <property type="expression patterns" value="Expressed in stomach and 5 other cell types or tissues"/>
</dbReference>
<dbReference type="GO" id="GO:0005737">
    <property type="term" value="C:cytoplasm"/>
    <property type="evidence" value="ECO:0007669"/>
    <property type="project" value="UniProtKB-KW"/>
</dbReference>
<dbReference type="GO" id="GO:0005856">
    <property type="term" value="C:cytoskeleton"/>
    <property type="evidence" value="ECO:0007669"/>
    <property type="project" value="UniProtKB-SubCell"/>
</dbReference>
<dbReference type="GO" id="GO:0005886">
    <property type="term" value="C:plasma membrane"/>
    <property type="evidence" value="ECO:0000266"/>
    <property type="project" value="RGD"/>
</dbReference>
<dbReference type="GO" id="GO:0008076">
    <property type="term" value="C:voltage-gated potassium channel complex"/>
    <property type="evidence" value="ECO:0000250"/>
    <property type="project" value="UniProtKB"/>
</dbReference>
<dbReference type="GO" id="GO:0099104">
    <property type="term" value="F:potassium channel activator activity"/>
    <property type="evidence" value="ECO:0000266"/>
    <property type="project" value="RGD"/>
</dbReference>
<dbReference type="GO" id="GO:0015459">
    <property type="term" value="F:potassium channel regulator activity"/>
    <property type="evidence" value="ECO:0000250"/>
    <property type="project" value="UniProtKB"/>
</dbReference>
<dbReference type="GO" id="GO:0044325">
    <property type="term" value="F:transmembrane transporter binding"/>
    <property type="evidence" value="ECO:0000266"/>
    <property type="project" value="RGD"/>
</dbReference>
<dbReference type="GO" id="GO:0005249">
    <property type="term" value="F:voltage-gated potassium channel activity"/>
    <property type="evidence" value="ECO:0000266"/>
    <property type="project" value="RGD"/>
</dbReference>
<dbReference type="GO" id="GO:0071805">
    <property type="term" value="P:potassium ion transmembrane transport"/>
    <property type="evidence" value="ECO:0000266"/>
    <property type="project" value="RGD"/>
</dbReference>
<dbReference type="FunFam" id="3.80.10.10:FF:000015">
    <property type="entry name" value="Leucine rich repeat containing 38"/>
    <property type="match status" value="1"/>
</dbReference>
<dbReference type="Gene3D" id="3.80.10.10">
    <property type="entry name" value="Ribonuclease Inhibitor"/>
    <property type="match status" value="1"/>
</dbReference>
<dbReference type="InterPro" id="IPR000483">
    <property type="entry name" value="Cys-rich_flank_reg_C"/>
</dbReference>
<dbReference type="InterPro" id="IPR051432">
    <property type="entry name" value="KCNMA1_auxiliary"/>
</dbReference>
<dbReference type="InterPro" id="IPR001611">
    <property type="entry name" value="Leu-rich_rpt"/>
</dbReference>
<dbReference type="InterPro" id="IPR003591">
    <property type="entry name" value="Leu-rich_rpt_typical-subtyp"/>
</dbReference>
<dbReference type="InterPro" id="IPR032675">
    <property type="entry name" value="LRR_dom_sf"/>
</dbReference>
<dbReference type="PANTHER" id="PTHR46473">
    <property type="entry name" value="GH08155P"/>
    <property type="match status" value="1"/>
</dbReference>
<dbReference type="PANTHER" id="PTHR46473:SF2">
    <property type="entry name" value="LEUCINE-RICH REPEAT-CONTAINING PROTEIN 26"/>
    <property type="match status" value="1"/>
</dbReference>
<dbReference type="Pfam" id="PF13855">
    <property type="entry name" value="LRR_8"/>
    <property type="match status" value="2"/>
</dbReference>
<dbReference type="SMART" id="SM00369">
    <property type="entry name" value="LRR_TYP"/>
    <property type="match status" value="5"/>
</dbReference>
<dbReference type="SMART" id="SM00082">
    <property type="entry name" value="LRRCT"/>
    <property type="match status" value="1"/>
</dbReference>
<dbReference type="SUPFAM" id="SSF52058">
    <property type="entry name" value="L domain-like"/>
    <property type="match status" value="1"/>
</dbReference>
<dbReference type="PROSITE" id="PS51450">
    <property type="entry name" value="LRR"/>
    <property type="match status" value="5"/>
</dbReference>
<proteinExistence type="evidence at transcript level"/>
<keyword id="KW-1003">Cell membrane</keyword>
<keyword id="KW-0963">Cytoplasm</keyword>
<keyword id="KW-0206">Cytoskeleton</keyword>
<keyword id="KW-1015">Disulfide bond</keyword>
<keyword id="KW-0407">Ion channel</keyword>
<keyword id="KW-0406">Ion transport</keyword>
<keyword id="KW-0433">Leucine-rich repeat</keyword>
<keyword id="KW-0472">Membrane</keyword>
<keyword id="KW-1185">Reference proteome</keyword>
<keyword id="KW-0677">Repeat</keyword>
<keyword id="KW-0732">Signal</keyword>
<keyword id="KW-0812">Transmembrane</keyword>
<keyword id="KW-1133">Transmembrane helix</keyword>
<keyword id="KW-0813">Transport</keyword>
<reference key="1">
    <citation type="journal article" date="2004" name="Genome Res.">
        <title>The status, quality, and expansion of the NIH full-length cDNA project: the Mammalian Gene Collection (MGC).</title>
        <authorList>
            <consortium name="The MGC Project Team"/>
        </authorList>
    </citation>
    <scope>NUCLEOTIDE SEQUENCE [LARGE SCALE MRNA]</scope>
    <source>
        <tissue>Prostate</tissue>
    </source>
</reference>
<gene>
    <name type="primary">Lrrc26</name>
</gene>
<evidence type="ECO:0000250" key="1"/>
<evidence type="ECO:0000255" key="2"/>
<evidence type="ECO:0000256" key="3">
    <source>
        <dbReference type="SAM" id="MobiDB-lite"/>
    </source>
</evidence>
<comment type="function">
    <text evidence="1">Auxiliary protein of the large-conductance, voltage and calcium-activated potassium channel (BK alpha). Required for the conversion of BK alpha channels from a high-voltage to a low-voltage activated channel type in non-excitable cells. These are characterized by negative membrane voltages and constant low levels of calcium (By similarity).</text>
</comment>
<comment type="subunit">
    <text evidence="1">Interacts with KCNMA1.</text>
</comment>
<comment type="subcellular location">
    <subcellularLocation>
        <location evidence="1">Cell membrane</location>
        <topology evidence="1">Single-pass type I membrane protein</topology>
    </subcellularLocation>
    <subcellularLocation>
        <location evidence="1">Cytoplasm</location>
        <location evidence="1">Cytoskeleton</location>
    </subcellularLocation>
    <text evidence="1">Localizes to the cytoplasm when expressed at high levels.</text>
</comment>
<comment type="domain">
    <text evidence="1">The transmembrane domain is necessary for interaction with KCNMA1.</text>
</comment>
<feature type="signal peptide" evidence="1">
    <location>
        <begin position="1"/>
        <end position="30"/>
    </location>
</feature>
<feature type="chain" id="PRO_0000309362" description="Leucine-rich repeat-containing protein 26">
    <location>
        <begin position="31"/>
        <end position="334"/>
    </location>
</feature>
<feature type="topological domain" description="Extracellular" evidence="2">
    <location>
        <begin position="31"/>
        <end position="265"/>
    </location>
</feature>
<feature type="transmembrane region" description="Helical" evidence="2">
    <location>
        <begin position="266"/>
        <end position="286"/>
    </location>
</feature>
<feature type="topological domain" description="Cytoplasmic" evidence="2">
    <location>
        <begin position="287"/>
        <end position="334"/>
    </location>
</feature>
<feature type="domain" description="LRRNT">
    <location>
        <begin position="38"/>
        <end position="75"/>
    </location>
</feature>
<feature type="repeat" description="LRR 1">
    <location>
        <begin position="76"/>
        <end position="97"/>
    </location>
</feature>
<feature type="repeat" description="LRR 2">
    <location>
        <begin position="100"/>
        <end position="121"/>
    </location>
</feature>
<feature type="repeat" description="LRR 3">
    <location>
        <begin position="124"/>
        <end position="145"/>
    </location>
</feature>
<feature type="repeat" description="LRR 4">
    <location>
        <begin position="148"/>
        <end position="169"/>
    </location>
</feature>
<feature type="repeat" description="LRR 5">
    <location>
        <begin position="172"/>
        <end position="194"/>
    </location>
</feature>
<feature type="domain" description="LRRCT">
    <location>
        <begin position="205"/>
        <end position="259"/>
    </location>
</feature>
<feature type="region of interest" description="Disordered" evidence="3">
    <location>
        <begin position="312"/>
        <end position="334"/>
    </location>
</feature>
<feature type="disulfide bond" evidence="2">
    <location>
        <begin position="47"/>
        <end position="53"/>
    </location>
</feature>
<feature type="disulfide bond" evidence="2">
    <location>
        <begin position="51"/>
        <end position="61"/>
    </location>
</feature>
<feature type="disulfide bond" evidence="2">
    <location>
        <begin position="209"/>
        <end position="235"/>
    </location>
</feature>
<feature type="disulfide bond" evidence="2">
    <location>
        <begin position="211"/>
        <end position="257"/>
    </location>
</feature>